<accession>Q1GKJ2</accession>
<proteinExistence type="inferred from homology"/>
<keyword id="KW-0378">Hydrolase</keyword>
<keyword id="KW-0511">Multifunctional enzyme</keyword>
<keyword id="KW-0658">Purine biosynthesis</keyword>
<keyword id="KW-1185">Reference proteome</keyword>
<keyword id="KW-0808">Transferase</keyword>
<sequence length="529" mass="56292">MTDLHPVRRALLSVSDKTGLIELGKSLAERGVELLSTGGTAKALRDAGLTVKDVSEVTGFPEMMDGRVKTLHPMVHGGLLALRDNDAHVAAMTDHGIGEIDLLVVNLYPFEAALKRGAAYDEMIENIDIGGPAMIRAAAKNHAFVNVVVDVEDYGVLLEELDQNDGQTSFAFRQWLAQNAYARTAAYDAAVSNWMAGAIGLDAPRRRAFAGQIAQTLRYGENPHQDAAFYTDGTERVGVATAEQLQGKELSYNNINDTDAAFELVSEFAPEDGPAVAIIKHANPCGVARGATLLEAYNKAFDCDRTSAFGGIVALNMPLDAETAEAITQIFTEVVIAPGASDEAKAIFAAKKNLRLLITEGLPNPQDAGLTTRQVSGGMLVQDKDVGHRAMDDLKVVTEKAPTEEQMADLLFAWKVAKHVKSNAIVYVKDGQTVGVGAGQMSRVDSATIAGVKAQRMADAMELPESLAKGSAVASDAFFPFADGLMEAASNGATCVIQPGGSMRDDEVIKAANDAGLAMVFTGMRHFRH</sequence>
<evidence type="ECO:0000255" key="1">
    <source>
        <dbReference type="HAMAP-Rule" id="MF_00139"/>
    </source>
</evidence>
<evidence type="ECO:0000255" key="2">
    <source>
        <dbReference type="PROSITE-ProRule" id="PRU01202"/>
    </source>
</evidence>
<reference key="1">
    <citation type="submission" date="2006-05" db="EMBL/GenBank/DDBJ databases">
        <title>Complete sequence of chromosome of Silicibacter sp. TM1040.</title>
        <authorList>
            <consortium name="US DOE Joint Genome Institute"/>
            <person name="Copeland A."/>
            <person name="Lucas S."/>
            <person name="Lapidus A."/>
            <person name="Barry K."/>
            <person name="Detter J.C."/>
            <person name="Glavina del Rio T."/>
            <person name="Hammon N."/>
            <person name="Israni S."/>
            <person name="Dalin E."/>
            <person name="Tice H."/>
            <person name="Pitluck S."/>
            <person name="Brettin T."/>
            <person name="Bruce D."/>
            <person name="Han C."/>
            <person name="Tapia R."/>
            <person name="Goodwin L."/>
            <person name="Thompson L.S."/>
            <person name="Gilna P."/>
            <person name="Schmutz J."/>
            <person name="Larimer F."/>
            <person name="Land M."/>
            <person name="Hauser L."/>
            <person name="Kyrpides N."/>
            <person name="Kim E."/>
            <person name="Belas R."/>
            <person name="Moran M.A."/>
            <person name="Buchan A."/>
            <person name="Gonzalez J.M."/>
            <person name="Schell M.A."/>
            <person name="Sun F."/>
            <person name="Richardson P."/>
        </authorList>
    </citation>
    <scope>NUCLEOTIDE SEQUENCE [LARGE SCALE GENOMIC DNA]</scope>
    <source>
        <strain>TM1040</strain>
    </source>
</reference>
<protein>
    <recommendedName>
        <fullName evidence="1">Bifunctional purine biosynthesis protein PurH</fullName>
    </recommendedName>
    <domain>
        <recommendedName>
            <fullName evidence="1">Phosphoribosylaminoimidazolecarboxamide formyltransferase</fullName>
            <ecNumber evidence="1">2.1.2.3</ecNumber>
        </recommendedName>
        <alternativeName>
            <fullName evidence="1">AICAR transformylase</fullName>
        </alternativeName>
    </domain>
    <domain>
        <recommendedName>
            <fullName evidence="1">IMP cyclohydrolase</fullName>
            <ecNumber evidence="1">3.5.4.10</ecNumber>
        </recommendedName>
        <alternativeName>
            <fullName evidence="1">ATIC</fullName>
        </alternativeName>
        <alternativeName>
            <fullName evidence="1">IMP synthase</fullName>
        </alternativeName>
        <alternativeName>
            <fullName evidence="1">Inosinicase</fullName>
        </alternativeName>
    </domain>
</protein>
<name>PUR9_RUEST</name>
<organism>
    <name type="scientific">Ruegeria sp. (strain TM1040)</name>
    <name type="common">Silicibacter sp.</name>
    <dbReference type="NCBI Taxonomy" id="292414"/>
    <lineage>
        <taxon>Bacteria</taxon>
        <taxon>Pseudomonadati</taxon>
        <taxon>Pseudomonadota</taxon>
        <taxon>Alphaproteobacteria</taxon>
        <taxon>Rhodobacterales</taxon>
        <taxon>Roseobacteraceae</taxon>
        <taxon>Ruegeria</taxon>
    </lineage>
</organism>
<comment type="catalytic activity">
    <reaction evidence="1">
        <text>(6R)-10-formyltetrahydrofolate + 5-amino-1-(5-phospho-beta-D-ribosyl)imidazole-4-carboxamide = 5-formamido-1-(5-phospho-D-ribosyl)imidazole-4-carboxamide + (6S)-5,6,7,8-tetrahydrofolate</text>
        <dbReference type="Rhea" id="RHEA:22192"/>
        <dbReference type="ChEBI" id="CHEBI:57453"/>
        <dbReference type="ChEBI" id="CHEBI:58467"/>
        <dbReference type="ChEBI" id="CHEBI:58475"/>
        <dbReference type="ChEBI" id="CHEBI:195366"/>
        <dbReference type="EC" id="2.1.2.3"/>
    </reaction>
</comment>
<comment type="catalytic activity">
    <reaction evidence="1">
        <text>IMP + H2O = 5-formamido-1-(5-phospho-D-ribosyl)imidazole-4-carboxamide</text>
        <dbReference type="Rhea" id="RHEA:18445"/>
        <dbReference type="ChEBI" id="CHEBI:15377"/>
        <dbReference type="ChEBI" id="CHEBI:58053"/>
        <dbReference type="ChEBI" id="CHEBI:58467"/>
        <dbReference type="EC" id="3.5.4.10"/>
    </reaction>
</comment>
<comment type="pathway">
    <text evidence="1">Purine metabolism; IMP biosynthesis via de novo pathway; 5-formamido-1-(5-phospho-D-ribosyl)imidazole-4-carboxamide from 5-amino-1-(5-phospho-D-ribosyl)imidazole-4-carboxamide (10-formyl THF route): step 1/1.</text>
</comment>
<comment type="pathway">
    <text evidence="1">Purine metabolism; IMP biosynthesis via de novo pathway; IMP from 5-formamido-1-(5-phospho-D-ribosyl)imidazole-4-carboxamide: step 1/1.</text>
</comment>
<comment type="domain">
    <text evidence="1">The IMP cyclohydrolase activity resides in the N-terminal region.</text>
</comment>
<comment type="similarity">
    <text evidence="1">Belongs to the PurH family.</text>
</comment>
<dbReference type="EC" id="2.1.2.3" evidence="1"/>
<dbReference type="EC" id="3.5.4.10" evidence="1"/>
<dbReference type="EMBL" id="CP000377">
    <property type="protein sequence ID" value="ABF62824.1"/>
    <property type="molecule type" value="Genomic_DNA"/>
</dbReference>
<dbReference type="RefSeq" id="WP_011537460.1">
    <property type="nucleotide sequence ID" value="NC_008044.1"/>
</dbReference>
<dbReference type="SMR" id="Q1GKJ2"/>
<dbReference type="STRING" id="292414.TM1040_0091"/>
<dbReference type="KEGG" id="sit:TM1040_0091"/>
<dbReference type="eggNOG" id="COG0138">
    <property type="taxonomic scope" value="Bacteria"/>
</dbReference>
<dbReference type="HOGENOM" id="CLU_016316_5_2_5"/>
<dbReference type="OrthoDB" id="9802065at2"/>
<dbReference type="UniPathway" id="UPA00074">
    <property type="reaction ID" value="UER00133"/>
</dbReference>
<dbReference type="UniPathway" id="UPA00074">
    <property type="reaction ID" value="UER00135"/>
</dbReference>
<dbReference type="Proteomes" id="UP000000636">
    <property type="component" value="Chromosome"/>
</dbReference>
<dbReference type="GO" id="GO:0005829">
    <property type="term" value="C:cytosol"/>
    <property type="evidence" value="ECO:0007669"/>
    <property type="project" value="TreeGrafter"/>
</dbReference>
<dbReference type="GO" id="GO:0003937">
    <property type="term" value="F:IMP cyclohydrolase activity"/>
    <property type="evidence" value="ECO:0007669"/>
    <property type="project" value="UniProtKB-UniRule"/>
</dbReference>
<dbReference type="GO" id="GO:0004643">
    <property type="term" value="F:phosphoribosylaminoimidazolecarboxamide formyltransferase activity"/>
    <property type="evidence" value="ECO:0007669"/>
    <property type="project" value="UniProtKB-UniRule"/>
</dbReference>
<dbReference type="GO" id="GO:0006189">
    <property type="term" value="P:'de novo' IMP biosynthetic process"/>
    <property type="evidence" value="ECO:0007669"/>
    <property type="project" value="UniProtKB-UniRule"/>
</dbReference>
<dbReference type="CDD" id="cd01421">
    <property type="entry name" value="IMPCH"/>
    <property type="match status" value="1"/>
</dbReference>
<dbReference type="FunFam" id="3.40.140.20:FF:000001">
    <property type="entry name" value="Bifunctional purine biosynthesis protein PurH"/>
    <property type="match status" value="1"/>
</dbReference>
<dbReference type="FunFam" id="3.40.140.20:FF:000002">
    <property type="entry name" value="Bifunctional purine biosynthesis protein PurH"/>
    <property type="match status" value="1"/>
</dbReference>
<dbReference type="FunFam" id="3.40.50.1380:FF:000001">
    <property type="entry name" value="Bifunctional purine biosynthesis protein PurH"/>
    <property type="match status" value="1"/>
</dbReference>
<dbReference type="Gene3D" id="3.40.140.20">
    <property type="match status" value="2"/>
</dbReference>
<dbReference type="Gene3D" id="3.40.50.1380">
    <property type="entry name" value="Methylglyoxal synthase-like domain"/>
    <property type="match status" value="1"/>
</dbReference>
<dbReference type="HAMAP" id="MF_00139">
    <property type="entry name" value="PurH"/>
    <property type="match status" value="1"/>
</dbReference>
<dbReference type="InterPro" id="IPR024051">
    <property type="entry name" value="AICAR_Tfase_dup_dom_sf"/>
</dbReference>
<dbReference type="InterPro" id="IPR016193">
    <property type="entry name" value="Cytidine_deaminase-like"/>
</dbReference>
<dbReference type="InterPro" id="IPR011607">
    <property type="entry name" value="MGS-like_dom"/>
</dbReference>
<dbReference type="InterPro" id="IPR036914">
    <property type="entry name" value="MGS-like_dom_sf"/>
</dbReference>
<dbReference type="InterPro" id="IPR002695">
    <property type="entry name" value="PurH-like"/>
</dbReference>
<dbReference type="NCBIfam" id="NF002049">
    <property type="entry name" value="PRK00881.1"/>
    <property type="match status" value="1"/>
</dbReference>
<dbReference type="NCBIfam" id="TIGR00355">
    <property type="entry name" value="purH"/>
    <property type="match status" value="1"/>
</dbReference>
<dbReference type="PANTHER" id="PTHR11692:SF0">
    <property type="entry name" value="BIFUNCTIONAL PURINE BIOSYNTHESIS PROTEIN ATIC"/>
    <property type="match status" value="1"/>
</dbReference>
<dbReference type="PANTHER" id="PTHR11692">
    <property type="entry name" value="BIFUNCTIONAL PURINE BIOSYNTHESIS PROTEIN PURH"/>
    <property type="match status" value="1"/>
</dbReference>
<dbReference type="Pfam" id="PF01808">
    <property type="entry name" value="AICARFT_IMPCHas"/>
    <property type="match status" value="1"/>
</dbReference>
<dbReference type="Pfam" id="PF02142">
    <property type="entry name" value="MGS"/>
    <property type="match status" value="1"/>
</dbReference>
<dbReference type="PIRSF" id="PIRSF000414">
    <property type="entry name" value="AICARFT_IMPCHas"/>
    <property type="match status" value="1"/>
</dbReference>
<dbReference type="SMART" id="SM00798">
    <property type="entry name" value="AICARFT_IMPCHas"/>
    <property type="match status" value="1"/>
</dbReference>
<dbReference type="SMART" id="SM00851">
    <property type="entry name" value="MGS"/>
    <property type="match status" value="1"/>
</dbReference>
<dbReference type="SUPFAM" id="SSF53927">
    <property type="entry name" value="Cytidine deaminase-like"/>
    <property type="match status" value="1"/>
</dbReference>
<dbReference type="SUPFAM" id="SSF52335">
    <property type="entry name" value="Methylglyoxal synthase-like"/>
    <property type="match status" value="1"/>
</dbReference>
<dbReference type="PROSITE" id="PS51855">
    <property type="entry name" value="MGS"/>
    <property type="match status" value="1"/>
</dbReference>
<feature type="chain" id="PRO_1000057915" description="Bifunctional purine biosynthesis protein PurH">
    <location>
        <begin position="1"/>
        <end position="529"/>
    </location>
</feature>
<feature type="domain" description="MGS-like" evidence="2">
    <location>
        <begin position="2"/>
        <end position="149"/>
    </location>
</feature>
<gene>
    <name evidence="1" type="primary">purH</name>
    <name type="ordered locus">TM1040_0091</name>
</gene>